<dbReference type="EC" id="7.1.1.-" evidence="1"/>
<dbReference type="EMBL" id="AE017283">
    <property type="protein sequence ID" value="AAT83642.1"/>
    <property type="molecule type" value="Genomic_DNA"/>
</dbReference>
<dbReference type="RefSeq" id="WP_002530652.1">
    <property type="nucleotide sequence ID" value="NZ_CP025935.1"/>
</dbReference>
<dbReference type="SMR" id="Q6A6H1"/>
<dbReference type="EnsemblBacteria" id="AAT83642">
    <property type="protein sequence ID" value="AAT83642"/>
    <property type="gene ID" value="PPA1922"/>
</dbReference>
<dbReference type="KEGG" id="pac:PPA1922"/>
<dbReference type="PATRIC" id="fig|267747.3.peg.1975"/>
<dbReference type="eggNOG" id="COG1007">
    <property type="taxonomic scope" value="Bacteria"/>
</dbReference>
<dbReference type="HOGENOM" id="CLU_007100_1_1_11"/>
<dbReference type="Proteomes" id="UP000000603">
    <property type="component" value="Chromosome"/>
</dbReference>
<dbReference type="GO" id="GO:0005886">
    <property type="term" value="C:plasma membrane"/>
    <property type="evidence" value="ECO:0007669"/>
    <property type="project" value="UniProtKB-SubCell"/>
</dbReference>
<dbReference type="GO" id="GO:0008137">
    <property type="term" value="F:NADH dehydrogenase (ubiquinone) activity"/>
    <property type="evidence" value="ECO:0007669"/>
    <property type="project" value="InterPro"/>
</dbReference>
<dbReference type="GO" id="GO:0050136">
    <property type="term" value="F:NADH:ubiquinone reductase (non-electrogenic) activity"/>
    <property type="evidence" value="ECO:0007669"/>
    <property type="project" value="UniProtKB-UniRule"/>
</dbReference>
<dbReference type="GO" id="GO:0048038">
    <property type="term" value="F:quinone binding"/>
    <property type="evidence" value="ECO:0007669"/>
    <property type="project" value="UniProtKB-KW"/>
</dbReference>
<dbReference type="GO" id="GO:0042773">
    <property type="term" value="P:ATP synthesis coupled electron transport"/>
    <property type="evidence" value="ECO:0007669"/>
    <property type="project" value="InterPro"/>
</dbReference>
<dbReference type="HAMAP" id="MF_00445">
    <property type="entry name" value="NDH1_NuoN_1"/>
    <property type="match status" value="1"/>
</dbReference>
<dbReference type="InterPro" id="IPR010096">
    <property type="entry name" value="NADH-Q_OxRdtase_suN/2"/>
</dbReference>
<dbReference type="InterPro" id="IPR001750">
    <property type="entry name" value="ND/Mrp_TM"/>
</dbReference>
<dbReference type="NCBIfam" id="TIGR01770">
    <property type="entry name" value="NDH_I_N"/>
    <property type="match status" value="1"/>
</dbReference>
<dbReference type="NCBIfam" id="NF004441">
    <property type="entry name" value="PRK05777.1-4"/>
    <property type="match status" value="1"/>
</dbReference>
<dbReference type="PANTHER" id="PTHR22773">
    <property type="entry name" value="NADH DEHYDROGENASE"/>
    <property type="match status" value="1"/>
</dbReference>
<dbReference type="Pfam" id="PF00361">
    <property type="entry name" value="Proton_antipo_M"/>
    <property type="match status" value="1"/>
</dbReference>
<feature type="chain" id="PRO_0000391205" description="NADH-quinone oxidoreductase subunit N">
    <location>
        <begin position="1"/>
        <end position="538"/>
    </location>
</feature>
<feature type="transmembrane region" description="Helical" evidence="1">
    <location>
        <begin position="28"/>
        <end position="48"/>
    </location>
</feature>
<feature type="transmembrane region" description="Helical" evidence="1">
    <location>
        <begin position="57"/>
        <end position="77"/>
    </location>
</feature>
<feature type="transmembrane region" description="Helical" evidence="1">
    <location>
        <begin position="94"/>
        <end position="114"/>
    </location>
</feature>
<feature type="transmembrane region" description="Helical" evidence="1">
    <location>
        <begin position="147"/>
        <end position="167"/>
    </location>
</feature>
<feature type="transmembrane region" description="Helical" evidence="1">
    <location>
        <begin position="170"/>
        <end position="190"/>
    </location>
</feature>
<feature type="transmembrane region" description="Helical" evidence="1">
    <location>
        <begin position="206"/>
        <end position="226"/>
    </location>
</feature>
<feature type="transmembrane region" description="Helical" evidence="1">
    <location>
        <begin position="249"/>
        <end position="269"/>
    </location>
</feature>
<feature type="transmembrane region" description="Helical" evidence="1">
    <location>
        <begin position="288"/>
        <end position="308"/>
    </location>
</feature>
<feature type="transmembrane region" description="Helical" evidence="1">
    <location>
        <begin position="315"/>
        <end position="335"/>
    </location>
</feature>
<feature type="transmembrane region" description="Helical" evidence="1">
    <location>
        <begin position="343"/>
        <end position="363"/>
    </location>
</feature>
<feature type="transmembrane region" description="Helical" evidence="1">
    <location>
        <begin position="380"/>
        <end position="400"/>
    </location>
</feature>
<feature type="transmembrane region" description="Helical" evidence="1">
    <location>
        <begin position="424"/>
        <end position="444"/>
    </location>
</feature>
<feature type="transmembrane region" description="Helical" evidence="1">
    <location>
        <begin position="458"/>
        <end position="478"/>
    </location>
</feature>
<feature type="transmembrane region" description="Helical" evidence="1">
    <location>
        <begin position="503"/>
        <end position="523"/>
    </location>
</feature>
<name>NUON_CUTAK</name>
<evidence type="ECO:0000255" key="1">
    <source>
        <dbReference type="HAMAP-Rule" id="MF_00445"/>
    </source>
</evidence>
<organism>
    <name type="scientific">Cutibacterium acnes (strain DSM 16379 / KPA171202)</name>
    <name type="common">Propionibacterium acnes</name>
    <dbReference type="NCBI Taxonomy" id="267747"/>
    <lineage>
        <taxon>Bacteria</taxon>
        <taxon>Bacillati</taxon>
        <taxon>Actinomycetota</taxon>
        <taxon>Actinomycetes</taxon>
        <taxon>Propionibacteriales</taxon>
        <taxon>Propionibacteriaceae</taxon>
        <taxon>Cutibacterium</taxon>
    </lineage>
</organism>
<reference key="1">
    <citation type="journal article" date="2004" name="Science">
        <title>The complete genome sequence of Propionibacterium acnes, a commensal of human skin.</title>
        <authorList>
            <person name="Brueggemann H."/>
            <person name="Henne A."/>
            <person name="Hoster F."/>
            <person name="Liesegang H."/>
            <person name="Wiezer A."/>
            <person name="Strittmatter A."/>
            <person name="Hujer S."/>
            <person name="Duerre P."/>
            <person name="Gottschalk G."/>
        </authorList>
    </citation>
    <scope>NUCLEOTIDE SEQUENCE [LARGE SCALE GENOMIC DNA]</scope>
    <source>
        <strain>DSM 16379 / KPA171202</strain>
    </source>
</reference>
<proteinExistence type="inferred from homology"/>
<protein>
    <recommendedName>
        <fullName evidence="1">NADH-quinone oxidoreductase subunit N</fullName>
        <ecNumber evidence="1">7.1.1.-</ecNumber>
    </recommendedName>
    <alternativeName>
        <fullName evidence="1">NADH dehydrogenase I subunit N</fullName>
    </alternativeName>
    <alternativeName>
        <fullName evidence="1">NDH-1 subunit N</fullName>
    </alternativeName>
</protein>
<comment type="function">
    <text evidence="1">NDH-1 shuttles electrons from NADH, via FMN and iron-sulfur (Fe-S) centers, to quinones in the respiratory chain. The immediate electron acceptor for the enzyme in this species is believed to be a menaquinone. Couples the redox reaction to proton translocation (for every two electrons transferred, four hydrogen ions are translocated across the cytoplasmic membrane), and thus conserves the redox energy in a proton gradient.</text>
</comment>
<comment type="catalytic activity">
    <reaction evidence="1">
        <text>a quinone + NADH + 5 H(+)(in) = a quinol + NAD(+) + 4 H(+)(out)</text>
        <dbReference type="Rhea" id="RHEA:57888"/>
        <dbReference type="ChEBI" id="CHEBI:15378"/>
        <dbReference type="ChEBI" id="CHEBI:24646"/>
        <dbReference type="ChEBI" id="CHEBI:57540"/>
        <dbReference type="ChEBI" id="CHEBI:57945"/>
        <dbReference type="ChEBI" id="CHEBI:132124"/>
    </reaction>
</comment>
<comment type="subunit">
    <text evidence="1">NDH-1 is composed of 14 different subunits. Subunits NuoA, H, J, K, L, M, N constitute the membrane sector of the complex.</text>
</comment>
<comment type="subcellular location">
    <subcellularLocation>
        <location evidence="1">Cell membrane</location>
        <topology evidence="1">Multi-pass membrane protein</topology>
    </subcellularLocation>
</comment>
<comment type="similarity">
    <text evidence="1">Belongs to the complex I subunit 2 family.</text>
</comment>
<sequence length="538" mass="56415">MNPALLITASGLPALLDVAAPHLEWGPLAPVFVLMAGACVAVLVEAFVPRSGRRSTQIIVTVATLVVAIASTLTTIARGTRIVAGQGTLAPDGPTLATWVILLATGLGTVVLFAERVGTTQTAFVASASSVPGSPLEAKAEQEHREHTEVYPLLMFAALGMMCFAAANDLIMMFVALEIFSLPLYLLCGMSRRRRLLSQEAALKYFLLGALSSALFLYGIVLLYGCAGSFKLGDLAAAGVTQVGSSKLIVAGMILVAVGLLFKIGAVPFASWTPDVYTGAPTPVSGWMAVATKLVALVGLMRVLYVGLGAMRWDWQIVLAVVAVASMGVGAIVGLAQTDMKRLLAYSAIAHAGFVLVGVVGAWTTQTGMAEGQTGSVSSVLVYMTAYGLASIGFWLLILMVRRAGGESTEIASWAGIGRSHPWIGVLVVIFVLSFAGIPLTAGFTGKLVVFLAGWRGGYAWLVLIGVLFSLVAAAFYLRIIVVVFFRSAKEGDDPVEVAEPSIAGWITLIVCAVFTIVMGVAPQPIIDLFNQASTFLR</sequence>
<gene>
    <name evidence="1" type="primary">nuoN</name>
    <name type="ordered locus">PPA1922</name>
</gene>
<keyword id="KW-1003">Cell membrane</keyword>
<keyword id="KW-0472">Membrane</keyword>
<keyword id="KW-0520">NAD</keyword>
<keyword id="KW-0874">Quinone</keyword>
<keyword id="KW-1278">Translocase</keyword>
<keyword id="KW-0812">Transmembrane</keyword>
<keyword id="KW-1133">Transmembrane helix</keyword>
<keyword id="KW-0813">Transport</keyword>
<accession>Q6A6H1</accession>